<feature type="chain" id="PRO_0000148734" description="Vacuolar protein sorting-associated protein 54">
    <location>
        <begin position="1"/>
        <end position="1055"/>
    </location>
</feature>
<feature type="region of interest" description="Disordered" evidence="3">
    <location>
        <begin position="774"/>
        <end position="794"/>
    </location>
</feature>
<feature type="coiled-coil region" evidence="2">
    <location>
        <begin position="363"/>
        <end position="383"/>
    </location>
</feature>
<comment type="function">
    <text evidence="1">Acts as a component of the GARP complex that is involved in retrograde transport from early and late endosomes to the trans-Golgi network (TGN). The GARP complex facilitates tethering as well as SNARE complex assembly at the Golgi (By similarity).</text>
</comment>
<comment type="subunit">
    <text evidence="1">Component of the Golgi-associated retrograde protein (GARP) complex, also called VFT (VPS fifty-three) complex, composed of VPS51, VPS52, VPS53 and VPS54.</text>
</comment>
<comment type="subcellular location">
    <subcellularLocation>
        <location evidence="1">Golgi apparatus</location>
        <location evidence="1">trans-Golgi network</location>
    </subcellularLocation>
</comment>
<comment type="similarity">
    <text evidence="4">Belongs to the VPS54 family.</text>
</comment>
<evidence type="ECO:0000250" key="1"/>
<evidence type="ECO:0000255" key="2"/>
<evidence type="ECO:0000256" key="3">
    <source>
        <dbReference type="SAM" id="MobiDB-lite"/>
    </source>
</evidence>
<evidence type="ECO:0000305" key="4"/>
<keyword id="KW-0175">Coiled coil</keyword>
<keyword id="KW-0333">Golgi apparatus</keyword>
<keyword id="KW-0653">Protein transport</keyword>
<keyword id="KW-1185">Reference proteome</keyword>
<keyword id="KW-0813">Transport</keyword>
<organism>
    <name type="scientific">Caenorhabditis briggsae</name>
    <dbReference type="NCBI Taxonomy" id="6238"/>
    <lineage>
        <taxon>Eukaryota</taxon>
        <taxon>Metazoa</taxon>
        <taxon>Ecdysozoa</taxon>
        <taxon>Nematoda</taxon>
        <taxon>Chromadorea</taxon>
        <taxon>Rhabditida</taxon>
        <taxon>Rhabditina</taxon>
        <taxon>Rhabditomorpha</taxon>
        <taxon>Rhabditoidea</taxon>
        <taxon>Rhabditidae</taxon>
        <taxon>Peloderinae</taxon>
        <taxon>Caenorhabditis</taxon>
    </lineage>
</organism>
<name>VPS54_CAEBR</name>
<proteinExistence type="inferred from homology"/>
<dbReference type="EMBL" id="HE600998">
    <property type="protein sequence ID" value="CAP28967.1"/>
    <property type="molecule type" value="Genomic_DNA"/>
</dbReference>
<dbReference type="SMR" id="Q61JT8"/>
<dbReference type="FunCoup" id="Q61JT8">
    <property type="interactions" value="2020"/>
</dbReference>
<dbReference type="STRING" id="6238.Q61JT8"/>
<dbReference type="KEGG" id="cbr:CBG_09643"/>
<dbReference type="CTD" id="8579137"/>
<dbReference type="WormBase" id="CBG09643">
    <property type="protein sequence ID" value="CBP43059"/>
    <property type="gene ID" value="WBGene00031201"/>
    <property type="gene designation" value="Cbr-vps-54"/>
</dbReference>
<dbReference type="eggNOG" id="KOG2115">
    <property type="taxonomic scope" value="Eukaryota"/>
</dbReference>
<dbReference type="HOGENOM" id="CLU_005185_1_0_1"/>
<dbReference type="InParanoid" id="Q61JT8"/>
<dbReference type="OMA" id="FSFVQSY"/>
<dbReference type="Proteomes" id="UP000008549">
    <property type="component" value="Unassembled WGS sequence"/>
</dbReference>
<dbReference type="GO" id="GO:0005829">
    <property type="term" value="C:cytosol"/>
    <property type="evidence" value="ECO:0007669"/>
    <property type="project" value="GOC"/>
</dbReference>
<dbReference type="GO" id="GO:0000938">
    <property type="term" value="C:GARP complex"/>
    <property type="evidence" value="ECO:0000318"/>
    <property type="project" value="GO_Central"/>
</dbReference>
<dbReference type="GO" id="GO:0019905">
    <property type="term" value="F:syntaxin binding"/>
    <property type="evidence" value="ECO:0000318"/>
    <property type="project" value="GO_Central"/>
</dbReference>
<dbReference type="GO" id="GO:0006896">
    <property type="term" value="P:Golgi to vacuole transport"/>
    <property type="evidence" value="ECO:0000318"/>
    <property type="project" value="GO_Central"/>
</dbReference>
<dbReference type="GO" id="GO:0015031">
    <property type="term" value="P:protein transport"/>
    <property type="evidence" value="ECO:0007669"/>
    <property type="project" value="UniProtKB-KW"/>
</dbReference>
<dbReference type="GO" id="GO:0042147">
    <property type="term" value="P:retrograde transport, endosome to Golgi"/>
    <property type="evidence" value="ECO:0000318"/>
    <property type="project" value="GO_Central"/>
</dbReference>
<dbReference type="Gene3D" id="1.20.1280.130">
    <property type="match status" value="1"/>
</dbReference>
<dbReference type="Gene3D" id="6.10.250.860">
    <property type="match status" value="1"/>
</dbReference>
<dbReference type="InterPro" id="IPR039745">
    <property type="entry name" value="Vps54"/>
</dbReference>
<dbReference type="InterPro" id="IPR012501">
    <property type="entry name" value="Vps54_C"/>
</dbReference>
<dbReference type="InterPro" id="IPR019515">
    <property type="entry name" value="VPS54_N"/>
</dbReference>
<dbReference type="PANTHER" id="PTHR12965">
    <property type="entry name" value="VACUOLAR PROTEIN SORTING 54"/>
    <property type="match status" value="1"/>
</dbReference>
<dbReference type="PANTHER" id="PTHR12965:SF0">
    <property type="entry name" value="VACUOLAR PROTEIN SORTING-ASSOCIATED PROTEIN 54"/>
    <property type="match status" value="1"/>
</dbReference>
<dbReference type="Pfam" id="PF07928">
    <property type="entry name" value="Vps54"/>
    <property type="match status" value="1"/>
</dbReference>
<dbReference type="Pfam" id="PF10475">
    <property type="entry name" value="Vps54_N"/>
    <property type="match status" value="1"/>
</dbReference>
<gene>
    <name type="primary">vps-54</name>
    <name type="ORF">CBG09643</name>
</gene>
<protein>
    <recommendedName>
        <fullName>Vacuolar protein sorting-associated protein 54</fullName>
    </recommendedName>
</protein>
<accession>Q61JT8</accession>
<accession>A8X8K6</accession>
<reference key="1">
    <citation type="journal article" date="2003" name="PLoS Biol.">
        <title>The genome sequence of Caenorhabditis briggsae: a platform for comparative genomics.</title>
        <authorList>
            <person name="Stein L.D."/>
            <person name="Bao Z."/>
            <person name="Blasiar D."/>
            <person name="Blumenthal T."/>
            <person name="Brent M.R."/>
            <person name="Chen N."/>
            <person name="Chinwalla A."/>
            <person name="Clarke L."/>
            <person name="Clee C."/>
            <person name="Coghlan A."/>
            <person name="Coulson A."/>
            <person name="D'Eustachio P."/>
            <person name="Fitch D.H.A."/>
            <person name="Fulton L.A."/>
            <person name="Fulton R.E."/>
            <person name="Griffiths-Jones S."/>
            <person name="Harris T.W."/>
            <person name="Hillier L.W."/>
            <person name="Kamath R."/>
            <person name="Kuwabara P.E."/>
            <person name="Mardis E.R."/>
            <person name="Marra M.A."/>
            <person name="Miner T.L."/>
            <person name="Minx P."/>
            <person name="Mullikin J.C."/>
            <person name="Plumb R.W."/>
            <person name="Rogers J."/>
            <person name="Schein J.E."/>
            <person name="Sohrmann M."/>
            <person name="Spieth J."/>
            <person name="Stajich J.E."/>
            <person name="Wei C."/>
            <person name="Willey D."/>
            <person name="Wilson R.K."/>
            <person name="Durbin R.M."/>
            <person name="Waterston R.H."/>
        </authorList>
    </citation>
    <scope>NUCLEOTIDE SEQUENCE [LARGE SCALE GENOMIC DNA]</scope>
    <source>
        <strain>AF16</strain>
    </source>
</reference>
<sequence length="1055" mass="118801">MKAMEERTVGLISASSSRASLKTQLENGYPRICDYCEPTIEFLSSSELARHIRQDHTTQEGGSFLCRYGEHGVCQKLPLEGVCDVDFEAHIRRCHTSQSVPYSRSTSCFTEDNEEAASLRSIRLTSDRDTPTIEKKKFTLHSFTQNLSAVLADPSRSRNDLSTFFTRHWGDTFVPTQPVPTSKRLAKMADASFDSYCQAAGESYKRYQAVKRALRLSHTEGTESGNERQDAEDLPTVFIDPRFTLGDSSTFSAVFTVPANENLDALKQTLSGKNVIPATPLEVAINKKPGEFRDYEALQNRLEMMHDVVDGRLAGKLVAKTDDFWQVVRSYSGLQEQLANALQCVMVVRKNLKHVDELVCDQTKKIIEVHQKYEQKKHLLAKLNDIACLREAQSTVQMMLSQGDYPKAIECIETSLDVLSKELNGVTCFRHLSSQLRELYSVIGRMMNEDFTSLIQKEFGVKPEAGTLIQAEGELSAVLLGLMRMRKYTFISVLREEIIEGVKSVMRHVIKSQILNSGVDLSDFDPSLTQLGEPVRRMKHADFLKTVRAVMDEEYFFCKRLEALQDILLETAQRAHPSNRHGSEDIIIERLEEAKLNESDSDDETGSFSKSTSSGGFVSGSAVNSNATATTLLSIEVRSEAFLKRVLPLIAEFGHQCAQQRISRLLIARAKNASVTEATTPTQLSECIAIVKEYQSQCEEEGWYSTQNQKAGGLGRAINKLSMDYIEKFHAARKMRIGNMLDTELWKATDVSIIDQNMVDQAIETGMLRSSKRIDDGPTKKPFKRTGSSATIDSGTSVSNQTGIIVDEESFVVVGSSITMIQILADYCEAISKMPTFAQDWNSRVIELLKTFNSRCCQLILGAGALQLVGLKTISVRNLGTIFVNLTLAGRSLELVCRFIPMVHDEMDRVLPDDRKSLLRYFKGVESEYRDHVNEIAIKLISVIAHYTTNCLGMWDVKGNIPSPEFQQICRHMLKFHNGLTGIMPRDQIESLFRQVHENFKANLREHVTGMGIRPHDTLKYGYVTQDYMYYQQNVKNMESCRNLELESLNDIMFD</sequence>